<feature type="chain" id="PRO_0000247498" description="Tryptophan decarboxylase 2">
    <location>
        <begin position="1"/>
        <end position="497"/>
    </location>
</feature>
<feature type="binding site" evidence="1">
    <location>
        <position position="162"/>
    </location>
    <ligand>
        <name>pyridoxal 5'-phosphate</name>
        <dbReference type="ChEBI" id="CHEBI:597326"/>
    </ligand>
</feature>
<feature type="binding site" evidence="1">
    <location>
        <position position="163"/>
    </location>
    <ligand>
        <name>pyridoxal 5'-phosphate</name>
        <dbReference type="ChEBI" id="CHEBI:597326"/>
    </ligand>
</feature>
<feature type="binding site" evidence="1">
    <location>
        <position position="257"/>
    </location>
    <ligand>
        <name>pyridoxal 5'-phosphate</name>
        <dbReference type="ChEBI" id="CHEBI:597326"/>
    </ligand>
</feature>
<feature type="binding site" evidence="1">
    <location>
        <position position="311"/>
    </location>
    <ligand>
        <name>pyridoxal 5'-phosphate</name>
        <dbReference type="ChEBI" id="CHEBI:597326"/>
    </ligand>
</feature>
<feature type="modified residue" description="N6-(pyridoxal phosphate)lysine" evidence="1">
    <location>
        <position position="314"/>
    </location>
</feature>
<evidence type="ECO:0000250" key="1">
    <source>
        <dbReference type="UniProtKB" id="P20711"/>
    </source>
</evidence>
<evidence type="ECO:0000269" key="2">
    <source>
    </source>
</evidence>
<evidence type="ECO:0000269" key="3">
    <source>
    </source>
</evidence>
<evidence type="ECO:0000303" key="4">
    <source>
    </source>
</evidence>
<evidence type="ECO:0000305" key="5"/>
<evidence type="ECO:0000312" key="6">
    <source>
        <dbReference type="EMBL" id="BAC80122.1"/>
    </source>
</evidence>
<evidence type="ECO:0000312" key="7">
    <source>
        <dbReference type="EMBL" id="BAD30830.1"/>
    </source>
</evidence>
<evidence type="ECO:0000312" key="8">
    <source>
        <dbReference type="EMBL" id="BAT01249.1"/>
    </source>
</evidence>
<comment type="function">
    <text evidence="2 3">Involved in serotonin biosynthesis. Catalyzes the decarboxylation of L-tryptophan to tryptamine, which is converted to serotonin by tryptamine 5-hydroxylase (PubMed:17763868). May play a minor role in serotonin biosynthetis during senescence. Accumulation of serotonin attenuates leaf senescence (PubMed:19439571).</text>
</comment>
<comment type="catalytic activity">
    <reaction evidence="2">
        <text>L-tryptophan + H(+) = tryptamine + CO2</text>
        <dbReference type="Rhea" id="RHEA:30339"/>
        <dbReference type="ChEBI" id="CHEBI:15378"/>
        <dbReference type="ChEBI" id="CHEBI:16526"/>
        <dbReference type="ChEBI" id="CHEBI:57887"/>
        <dbReference type="ChEBI" id="CHEBI:57912"/>
    </reaction>
</comment>
<comment type="cofactor">
    <cofactor evidence="1">
        <name>pyridoxal 5'-phosphate</name>
        <dbReference type="ChEBI" id="CHEBI:597326"/>
    </cofactor>
</comment>
<comment type="similarity">
    <text evidence="5">Belongs to the group II decarboxylase family.</text>
</comment>
<gene>
    <name evidence="4" type="primary">TDC2</name>
    <name evidence="8" type="ordered locus">Os07g0437500</name>
    <name evidence="5" type="ordered locus">LOC_Os07g25590</name>
    <name evidence="7" type="ORF">OSJNBa0026I22.3</name>
    <name evidence="6" type="ORF">OSJNBb0095H08.30</name>
</gene>
<sequence>MEGVGGGGGGEEWLRPMDAEQLRECGHRMVDFVADYYKSIEAFPVLSQVQPGYLKEVLPDSAPRQPDTLDSLFDDIQQKIIPGVTHWQSPNYFAYYPSNSSTAGFLGEMLSAAFNIVGFSWITSPAATELEVIVLDWFAKMLQLPSQFLSTALGGGVIQGTASEAVLVALLAARDRALKKHGKHSLEKLVVYASDQTHSALQKACQIAGIFSENVRVVIADCNKNYAVAPEAVSEALSIDLSSGLIPFFICATVGTTSSSAVDPLPELGQIAKSNDMWFHIDAAYAGSACICPEYRHHLNGVEEADSFNMNAHKWFLTNFDCSLLWVKDRSFLIQSLSTNPEFLKNKASQANSVVDFKDWQIPLGRRFRSLKLWMVLRLYGVDNLQSYIRKHIHLAEHFEQLLLSDSRFEVVTPRTFSLVCFRLVPPTSDHENGRKLNYDMMDGVNSSGKIFLSHTVLSGKFVLRFAVGAPLTEERHVDAAWKLLRDEATKVLGKMV</sequence>
<dbReference type="EC" id="4.1.1.-" evidence="2"/>
<dbReference type="EMBL" id="AP005101">
    <property type="protein sequence ID" value="BAD30830.1"/>
    <property type="molecule type" value="Genomic_DNA"/>
</dbReference>
<dbReference type="EMBL" id="AP005783">
    <property type="protein sequence ID" value="BAC80122.1"/>
    <property type="molecule type" value="Genomic_DNA"/>
</dbReference>
<dbReference type="EMBL" id="AP008213">
    <property type="protein sequence ID" value="BAF21423.1"/>
    <property type="molecule type" value="Genomic_DNA"/>
</dbReference>
<dbReference type="EMBL" id="AP014963">
    <property type="protein sequence ID" value="BAT01249.1"/>
    <property type="molecule type" value="Genomic_DNA"/>
</dbReference>
<dbReference type="EMBL" id="AK103253">
    <property type="protein sequence ID" value="BAG95977.1"/>
    <property type="molecule type" value="mRNA"/>
</dbReference>
<dbReference type="RefSeq" id="XP_015644906.1">
    <property type="nucleotide sequence ID" value="XM_015789420.1"/>
</dbReference>
<dbReference type="SMR" id="Q7XHL3"/>
<dbReference type="FunCoup" id="Q7XHL3">
    <property type="interactions" value="334"/>
</dbReference>
<dbReference type="STRING" id="39947.Q7XHL3"/>
<dbReference type="PaxDb" id="39947-Q7XHL3"/>
<dbReference type="EnsemblPlants" id="Os07t0437500-01">
    <property type="protein sequence ID" value="Os07t0437500-01"/>
    <property type="gene ID" value="Os07g0437500"/>
</dbReference>
<dbReference type="Gramene" id="Os07t0437500-01">
    <property type="protein sequence ID" value="Os07t0437500-01"/>
    <property type="gene ID" value="Os07g0437500"/>
</dbReference>
<dbReference type="KEGG" id="dosa:Os07g0437500"/>
<dbReference type="eggNOG" id="KOG0628">
    <property type="taxonomic scope" value="Eukaryota"/>
</dbReference>
<dbReference type="HOGENOM" id="CLU_011856_3_1_1"/>
<dbReference type="InParanoid" id="Q7XHL3"/>
<dbReference type="OMA" id="NPGFNWS"/>
<dbReference type="OrthoDB" id="639767at2759"/>
<dbReference type="PlantReactome" id="R-OSA-1119344">
    <property type="pathway name" value="Hydroxycinnamic acid serotonin amides biosynthesis"/>
</dbReference>
<dbReference type="PlantReactome" id="R-OSA-1119438">
    <property type="pathway name" value="Secologanin and strictosidine biosynthesis"/>
</dbReference>
<dbReference type="PlantReactome" id="R-OSA-1119486">
    <property type="pathway name" value="IAA biosynthesis I"/>
</dbReference>
<dbReference type="Proteomes" id="UP000000763">
    <property type="component" value="Chromosome 7"/>
</dbReference>
<dbReference type="Proteomes" id="UP000059680">
    <property type="component" value="Chromosome 7"/>
</dbReference>
<dbReference type="ExpressionAtlas" id="Q7XHL3">
    <property type="expression patterns" value="baseline and differential"/>
</dbReference>
<dbReference type="GO" id="GO:0005737">
    <property type="term" value="C:cytoplasm"/>
    <property type="evidence" value="ECO:0000318"/>
    <property type="project" value="GO_Central"/>
</dbReference>
<dbReference type="GO" id="GO:0016831">
    <property type="term" value="F:carboxy-lyase activity"/>
    <property type="evidence" value="ECO:0000318"/>
    <property type="project" value="GO_Central"/>
</dbReference>
<dbReference type="GO" id="GO:0036469">
    <property type="term" value="F:L-tryptophan decarboxylase activity"/>
    <property type="evidence" value="ECO:0000314"/>
    <property type="project" value="UniProtKB"/>
</dbReference>
<dbReference type="GO" id="GO:0030170">
    <property type="term" value="F:pyridoxal phosphate binding"/>
    <property type="evidence" value="ECO:0007669"/>
    <property type="project" value="InterPro"/>
</dbReference>
<dbReference type="GO" id="GO:0006587">
    <property type="term" value="P:serotonin biosynthetic process from tryptophan"/>
    <property type="evidence" value="ECO:0000314"/>
    <property type="project" value="UniProtKB"/>
</dbReference>
<dbReference type="CDD" id="cd06450">
    <property type="entry name" value="DOPA_deC_like"/>
    <property type="match status" value="1"/>
</dbReference>
<dbReference type="FunFam" id="1.20.1340.10:FF:000001">
    <property type="entry name" value="Histidine decarboxylase"/>
    <property type="match status" value="1"/>
</dbReference>
<dbReference type="FunFam" id="3.40.640.10:FF:000025">
    <property type="entry name" value="Histidine decarboxylase"/>
    <property type="match status" value="1"/>
</dbReference>
<dbReference type="Gene3D" id="3.90.1150.10">
    <property type="entry name" value="Aspartate Aminotransferase, domain 1"/>
    <property type="match status" value="1"/>
</dbReference>
<dbReference type="Gene3D" id="1.20.1340.10">
    <property type="entry name" value="dopa decarboxylase, N-terminal domain"/>
    <property type="match status" value="1"/>
</dbReference>
<dbReference type="Gene3D" id="3.40.640.10">
    <property type="entry name" value="Type I PLP-dependent aspartate aminotransferase-like (Major domain)"/>
    <property type="match status" value="1"/>
</dbReference>
<dbReference type="InterPro" id="IPR010977">
    <property type="entry name" value="Aromatic_deC"/>
</dbReference>
<dbReference type="InterPro" id="IPR002129">
    <property type="entry name" value="PyrdxlP-dep_de-COase"/>
</dbReference>
<dbReference type="InterPro" id="IPR015424">
    <property type="entry name" value="PyrdxlP-dep_Trfase"/>
</dbReference>
<dbReference type="InterPro" id="IPR015421">
    <property type="entry name" value="PyrdxlP-dep_Trfase_major"/>
</dbReference>
<dbReference type="InterPro" id="IPR015422">
    <property type="entry name" value="PyrdxlP-dep_Trfase_small"/>
</dbReference>
<dbReference type="InterPro" id="IPR021115">
    <property type="entry name" value="Pyridoxal-P_BS"/>
</dbReference>
<dbReference type="PANTHER" id="PTHR11999">
    <property type="entry name" value="GROUP II PYRIDOXAL-5-PHOSPHATE DECARBOXYLASE"/>
    <property type="match status" value="1"/>
</dbReference>
<dbReference type="PANTHER" id="PTHR11999:SF70">
    <property type="entry name" value="MIP05841P"/>
    <property type="match status" value="1"/>
</dbReference>
<dbReference type="Pfam" id="PF00282">
    <property type="entry name" value="Pyridoxal_deC"/>
    <property type="match status" value="1"/>
</dbReference>
<dbReference type="PRINTS" id="PR00800">
    <property type="entry name" value="YHDCRBOXLASE"/>
</dbReference>
<dbReference type="SUPFAM" id="SSF53383">
    <property type="entry name" value="PLP-dependent transferases"/>
    <property type="match status" value="1"/>
</dbReference>
<dbReference type="PROSITE" id="PS00392">
    <property type="entry name" value="DDC_GAD_HDC_YDC"/>
    <property type="match status" value="1"/>
</dbReference>
<accession>Q7XHL3</accession>
<accession>Q0D6V0</accession>
<protein>
    <recommendedName>
        <fullName evidence="4">Tryptophan decarboxylase 2</fullName>
        <ecNumber evidence="2">4.1.1.-</ecNumber>
    </recommendedName>
</protein>
<name>TDC2_ORYSJ</name>
<reference key="1">
    <citation type="journal article" date="2005" name="Nature">
        <title>The map-based sequence of the rice genome.</title>
        <authorList>
            <consortium name="International rice genome sequencing project (IRGSP)"/>
        </authorList>
    </citation>
    <scope>NUCLEOTIDE SEQUENCE [LARGE SCALE GENOMIC DNA]</scope>
    <source>
        <strain>cv. Nipponbare</strain>
    </source>
</reference>
<reference key="2">
    <citation type="journal article" date="2008" name="Nucleic Acids Res.">
        <title>The rice annotation project database (RAP-DB): 2008 update.</title>
        <authorList>
            <consortium name="The rice annotation project (RAP)"/>
        </authorList>
    </citation>
    <scope>GENOME REANNOTATION</scope>
    <source>
        <strain>cv. Nipponbare</strain>
    </source>
</reference>
<reference key="3">
    <citation type="journal article" date="2013" name="Rice">
        <title>Improvement of the Oryza sativa Nipponbare reference genome using next generation sequence and optical map data.</title>
        <authorList>
            <person name="Kawahara Y."/>
            <person name="de la Bastide M."/>
            <person name="Hamilton J.P."/>
            <person name="Kanamori H."/>
            <person name="McCombie W.R."/>
            <person name="Ouyang S."/>
            <person name="Schwartz D.C."/>
            <person name="Tanaka T."/>
            <person name="Wu J."/>
            <person name="Zhou S."/>
            <person name="Childs K.L."/>
            <person name="Davidson R.M."/>
            <person name="Lin H."/>
            <person name="Quesada-Ocampo L."/>
            <person name="Vaillancourt B."/>
            <person name="Sakai H."/>
            <person name="Lee S.S."/>
            <person name="Kim J."/>
            <person name="Numa H."/>
            <person name="Itoh T."/>
            <person name="Buell C.R."/>
            <person name="Matsumoto T."/>
        </authorList>
    </citation>
    <scope>GENOME REANNOTATION</scope>
    <source>
        <strain>cv. Nipponbare</strain>
    </source>
</reference>
<reference key="4">
    <citation type="journal article" date="2003" name="Science">
        <title>Collection, mapping, and annotation of over 28,000 cDNA clones from japonica rice.</title>
        <authorList>
            <consortium name="The rice full-length cDNA consortium"/>
        </authorList>
    </citation>
    <scope>NUCLEOTIDE SEQUENCE [LARGE SCALE MRNA]</scope>
    <source>
        <strain>cv. Nipponbare</strain>
    </source>
</reference>
<reference key="5">
    <citation type="journal article" date="2007" name="Planta">
        <title>Characterization of rice tryptophan decarboxylases and their direct involvement in serotonin biosynthesis in transgenic rice.</title>
        <authorList>
            <person name="Kang S."/>
            <person name="Kang K."/>
            <person name="Lee K."/>
            <person name="Back K."/>
        </authorList>
    </citation>
    <scope>FUNCTION</scope>
    <scope>CATALYTIC ACTIVITY</scope>
    <scope>BIOPHYSICOCHEMICAL PROPERTIES</scope>
</reference>
<reference key="6">
    <citation type="journal article" date="2009" name="Plant Physiol.">
        <title>Senescence-induced serotonin biosynthesis and its role in delaying senescence in rice leaves.</title>
        <authorList>
            <person name="Kang K."/>
            <person name="Kim Y.S."/>
            <person name="Park S."/>
            <person name="Back K."/>
        </authorList>
    </citation>
    <scope>FUNCTION</scope>
</reference>
<organism>
    <name type="scientific">Oryza sativa subsp. japonica</name>
    <name type="common">Rice</name>
    <dbReference type="NCBI Taxonomy" id="39947"/>
    <lineage>
        <taxon>Eukaryota</taxon>
        <taxon>Viridiplantae</taxon>
        <taxon>Streptophyta</taxon>
        <taxon>Embryophyta</taxon>
        <taxon>Tracheophyta</taxon>
        <taxon>Spermatophyta</taxon>
        <taxon>Magnoliopsida</taxon>
        <taxon>Liliopsida</taxon>
        <taxon>Poales</taxon>
        <taxon>Poaceae</taxon>
        <taxon>BOP clade</taxon>
        <taxon>Oryzoideae</taxon>
        <taxon>Oryzeae</taxon>
        <taxon>Oryzinae</taxon>
        <taxon>Oryza</taxon>
        <taxon>Oryza sativa</taxon>
    </lineage>
</organism>
<proteinExistence type="evidence at protein level"/>
<keyword id="KW-0210">Decarboxylase</keyword>
<keyword id="KW-0456">Lyase</keyword>
<keyword id="KW-0663">Pyridoxal phosphate</keyword>
<keyword id="KW-1185">Reference proteome</keyword>
<keyword id="KW-0724">Serotonin biosynthesis</keyword>